<keyword id="KW-0444">Lipid biosynthesis</keyword>
<keyword id="KW-0443">Lipid metabolism</keyword>
<keyword id="KW-0472">Membrane</keyword>
<keyword id="KW-0496">Mitochondrion</keyword>
<keyword id="KW-1000">Mitochondrion outer membrane</keyword>
<keyword id="KW-0548">Nucleotidyltransferase</keyword>
<keyword id="KW-0594">Phospholipid biosynthesis</keyword>
<keyword id="KW-1208">Phospholipid metabolism</keyword>
<keyword id="KW-0597">Phosphoprotein</keyword>
<keyword id="KW-1185">Reference proteome</keyword>
<keyword id="KW-0808">Transferase</keyword>
<keyword id="KW-0812">Transmembrane</keyword>
<keyword id="KW-1133">Transmembrane helix</keyword>
<reference key="1">
    <citation type="journal article" date="1999" name="Nature">
        <title>Sequence and analysis of chromosome 2 of the plant Arabidopsis thaliana.</title>
        <authorList>
            <person name="Lin X."/>
            <person name="Kaul S."/>
            <person name="Rounsley S.D."/>
            <person name="Shea T.P."/>
            <person name="Benito M.-I."/>
            <person name="Town C.D."/>
            <person name="Fujii C.Y."/>
            <person name="Mason T.M."/>
            <person name="Bowman C.L."/>
            <person name="Barnstead M.E."/>
            <person name="Feldblyum T.V."/>
            <person name="Buell C.R."/>
            <person name="Ketchum K.A."/>
            <person name="Lee J.J."/>
            <person name="Ronning C.M."/>
            <person name="Koo H.L."/>
            <person name="Moffat K.S."/>
            <person name="Cronin L.A."/>
            <person name="Shen M."/>
            <person name="Pai G."/>
            <person name="Van Aken S."/>
            <person name="Umayam L."/>
            <person name="Tallon L.J."/>
            <person name="Gill J.E."/>
            <person name="Adams M.D."/>
            <person name="Carrera A.J."/>
            <person name="Creasy T.H."/>
            <person name="Goodman H.M."/>
            <person name="Somerville C.R."/>
            <person name="Copenhaver G.P."/>
            <person name="Preuss D."/>
            <person name="Nierman W.C."/>
            <person name="White O."/>
            <person name="Eisen J.A."/>
            <person name="Salzberg S.L."/>
            <person name="Fraser C.M."/>
            <person name="Venter J.C."/>
        </authorList>
    </citation>
    <scope>NUCLEOTIDE SEQUENCE [LARGE SCALE GENOMIC DNA]</scope>
    <source>
        <strain>cv. Columbia</strain>
    </source>
</reference>
<reference key="2">
    <citation type="journal article" date="2017" name="Plant J.">
        <title>Araport11: a complete reannotation of the Arabidopsis thaliana reference genome.</title>
        <authorList>
            <person name="Cheng C.Y."/>
            <person name="Krishnakumar V."/>
            <person name="Chan A.P."/>
            <person name="Thibaud-Nissen F."/>
            <person name="Schobel S."/>
            <person name="Town C.D."/>
        </authorList>
    </citation>
    <scope>GENOME REANNOTATION</scope>
    <source>
        <strain>cv. Columbia</strain>
    </source>
</reference>
<reference key="3">
    <citation type="journal article" date="2003" name="Science">
        <title>Empirical analysis of transcriptional activity in the Arabidopsis genome.</title>
        <authorList>
            <person name="Yamada K."/>
            <person name="Lim J."/>
            <person name="Dale J.M."/>
            <person name="Chen H."/>
            <person name="Shinn P."/>
            <person name="Palm C.J."/>
            <person name="Southwick A.M."/>
            <person name="Wu H.C."/>
            <person name="Kim C.J."/>
            <person name="Nguyen M."/>
            <person name="Pham P.K."/>
            <person name="Cheuk R.F."/>
            <person name="Karlin-Newmann G."/>
            <person name="Liu S.X."/>
            <person name="Lam B."/>
            <person name="Sakano H."/>
            <person name="Wu T."/>
            <person name="Yu G."/>
            <person name="Miranda M."/>
            <person name="Quach H.L."/>
            <person name="Tripp M."/>
            <person name="Chang C.H."/>
            <person name="Lee J.M."/>
            <person name="Toriumi M.J."/>
            <person name="Chan M.M."/>
            <person name="Tang C.C."/>
            <person name="Onodera C.S."/>
            <person name="Deng J.M."/>
            <person name="Akiyama K."/>
            <person name="Ansari Y."/>
            <person name="Arakawa T."/>
            <person name="Banh J."/>
            <person name="Banno F."/>
            <person name="Bowser L."/>
            <person name="Brooks S.Y."/>
            <person name="Carninci P."/>
            <person name="Chao Q."/>
            <person name="Choy N."/>
            <person name="Enju A."/>
            <person name="Goldsmith A.D."/>
            <person name="Gurjal M."/>
            <person name="Hansen N.F."/>
            <person name="Hayashizaki Y."/>
            <person name="Johnson-Hopson C."/>
            <person name="Hsuan V.W."/>
            <person name="Iida K."/>
            <person name="Karnes M."/>
            <person name="Khan S."/>
            <person name="Koesema E."/>
            <person name="Ishida J."/>
            <person name="Jiang P.X."/>
            <person name="Jones T."/>
            <person name="Kawai J."/>
            <person name="Kamiya A."/>
            <person name="Meyers C."/>
            <person name="Nakajima M."/>
            <person name="Narusaka M."/>
            <person name="Seki M."/>
            <person name="Sakurai T."/>
            <person name="Satou M."/>
            <person name="Tamse R."/>
            <person name="Vaysberg M."/>
            <person name="Wallender E.K."/>
            <person name="Wong C."/>
            <person name="Yamamura Y."/>
            <person name="Yuan S."/>
            <person name="Shinozaki K."/>
            <person name="Davis R.W."/>
            <person name="Theologis A."/>
            <person name="Ecker J.R."/>
        </authorList>
    </citation>
    <scope>NUCLEOTIDE SEQUENCE [LARGE SCALE MRNA]</scope>
    <source>
        <strain>cv. Columbia</strain>
    </source>
</reference>
<reference key="4">
    <citation type="journal article" date="2004" name="FEBS Lett.">
        <title>Regulation of phosphatidylcholine biosynthesis under salt stress involves choline kinases in Arabidopsis thaliana.</title>
        <authorList>
            <person name="Tasseva G."/>
            <person name="Richard L."/>
            <person name="Zachowski A."/>
        </authorList>
    </citation>
    <scope>INDUCTION</scope>
</reference>
<reference key="5">
    <citation type="journal article" date="2006" name="Plant Cell">
        <title>Defects in CTP:PHOSPHORYLETHANOLAMINE CYTIDYLYLTRANSFERASE affect embryonic and postembryonic development in Arabidopsis.</title>
        <authorList>
            <person name="Mizoi J."/>
            <person name="Nakamura M."/>
            <person name="Nishida I."/>
        </authorList>
    </citation>
    <scope>FUNCTION</scope>
    <scope>CATALYTIC ACTIVITY</scope>
    <scope>SUBCELLULAR LOCATION</scope>
    <scope>TISSUE SPECIFICITY</scope>
    <scope>DISRUPTION PHENOTYPE</scope>
    <scope>MUTAGENESIS OF PRO-126</scope>
</reference>
<reference key="6">
    <citation type="journal article" date="2009" name="Plant Physiol.">
        <title>Large-scale Arabidopsis phosphoproteome profiling reveals novel chloroplast kinase substrates and phosphorylation networks.</title>
        <authorList>
            <person name="Reiland S."/>
            <person name="Messerli G."/>
            <person name="Baerenfaller K."/>
            <person name="Gerrits B."/>
            <person name="Endler A."/>
            <person name="Grossmann J."/>
            <person name="Gruissem W."/>
            <person name="Baginsky S."/>
        </authorList>
    </citation>
    <scope>PHOSPHORYLATION [LARGE SCALE ANALYSIS] AT SER-416</scope>
    <scope>IDENTIFICATION BY MASS SPECTROMETRY [LARGE SCALE ANALYSIS]</scope>
</reference>
<reference key="7">
    <citation type="journal article" date="2011" name="Plant Physiol.">
        <title>Multiple lines of evidence localize signaling, morphology, and lipid biosynthesis machinery to the mitochondrial outer membrane of Arabidopsis.</title>
        <authorList>
            <person name="Duncan O."/>
            <person name="Taylor N.L."/>
            <person name="Carrie C."/>
            <person name="Eubel H."/>
            <person name="Kubiszewski-Jakubiak S."/>
            <person name="Zhang B."/>
            <person name="Narsai R."/>
            <person name="Millar A.H."/>
            <person name="Whelan J."/>
        </authorList>
    </citation>
    <scope>SUBCELLULAR LOCATION</scope>
</reference>
<comment type="function">
    <text evidence="4">Plays an important role in the biosynthesis of the phospholipid phosphatidylethanolamine. Catalyzes the formation of CDP-ethanolamine. Essential for early embryonic development.</text>
</comment>
<comment type="catalytic activity">
    <reaction evidence="4">
        <text>phosphoethanolamine + CTP + H(+) = CDP-ethanolamine + diphosphate</text>
        <dbReference type="Rhea" id="RHEA:24592"/>
        <dbReference type="ChEBI" id="CHEBI:15378"/>
        <dbReference type="ChEBI" id="CHEBI:33019"/>
        <dbReference type="ChEBI" id="CHEBI:37563"/>
        <dbReference type="ChEBI" id="CHEBI:57876"/>
        <dbReference type="ChEBI" id="CHEBI:58190"/>
        <dbReference type="EC" id="2.7.7.14"/>
    </reaction>
    <physiologicalReaction direction="left-to-right" evidence="4">
        <dbReference type="Rhea" id="RHEA:24593"/>
    </physiologicalReaction>
</comment>
<comment type="pathway">
    <text evidence="6">Phospholipid metabolism; phosphatidylethanolamine biosynthesis; phosphatidylethanolamine from ethanolamine: step 2/3.</text>
</comment>
<comment type="subcellular location">
    <subcellularLocation>
        <location evidence="7 8">Mitochondrion outer membrane</location>
        <topology evidence="7 8">Single-pass membrane protein</topology>
    </subcellularLocation>
</comment>
<comment type="tissue specificity">
    <text evidence="4">Expressed in root tip, lateral root primordia, leaves, shoot apex, stem vascular bundles, pollen and embryos.</text>
</comment>
<comment type="disruption phenotype">
    <text evidence="4">Embryonic lethality when homozygous.</text>
</comment>
<comment type="similarity">
    <text evidence="6">Belongs to the cytidylyltransferase family.</text>
</comment>
<protein>
    <recommendedName>
        <fullName evidence="6">Ethanolamine-phosphate cytidylyltransferase</fullName>
        <ecNumber evidence="4">2.7.7.14</ecNumber>
    </recommendedName>
    <alternativeName>
        <fullName evidence="6">CTP:phosphoethanolamine cytidylyltransferase</fullName>
    </alternativeName>
    <alternativeName>
        <fullName evidence="5">Phosphorylethanolamine cytidylyltransferase 1</fullName>
    </alternativeName>
</protein>
<proteinExistence type="evidence at protein level"/>
<sequence length="421" mass="46978">MVWEKEKIVGSCIVGGAAFAVGASFLHLFLKGELPLGLGLGLSCPWRILRKRKPVRVYMDGCFDMMHYGHCNALRQARALGDQLVVGVVSDEEIIANKGPPVTPLHERMTMVKAVKWVDEVISDAPYAITEDFMKKLFDEYQIDYIIHGDDPCVLPDGTDAYALAKKAGRYKQIKRTEGVSSTDIVGRMLLCVRERSISDTHSRSSLQRQFSHGHSSPKFEDGASSAGTRVSHFLPTSRRIVQFSNGKGPGPDARIIYIDGAFDLFHAGHVEILRRARELGDFLLVGIHNDQTVSAKRGAHRPIMNLHERSLSVLACRYVDEVIIGAPWEVSRDTITTFDISLVVHGTVAESDDFRKEEDNPYSVPISMGIFQVLDSPLDITTSTIIRRIVANHEAYQKRNAKKEASEKKYYEQKSFVSGD</sequence>
<feature type="chain" id="PRO_0000423341" description="Ethanolamine-phosphate cytidylyltransferase">
    <location>
        <begin position="1"/>
        <end position="421"/>
    </location>
</feature>
<feature type="transmembrane region" description="Helical" evidence="2">
    <location>
        <begin position="8"/>
        <end position="28"/>
    </location>
</feature>
<feature type="region of interest" description="Disordered" evidence="3">
    <location>
        <begin position="203"/>
        <end position="227"/>
    </location>
</feature>
<feature type="region of interest" description="Disordered" evidence="3">
    <location>
        <begin position="402"/>
        <end position="421"/>
    </location>
</feature>
<feature type="compositionally biased region" description="Polar residues" evidence="3">
    <location>
        <begin position="204"/>
        <end position="215"/>
    </location>
</feature>
<feature type="compositionally biased region" description="Basic and acidic residues" evidence="3">
    <location>
        <begin position="403"/>
        <end position="413"/>
    </location>
</feature>
<feature type="binding site" evidence="1">
    <location>
        <begin position="262"/>
        <end position="263"/>
    </location>
    <ligand>
        <name>CTP</name>
        <dbReference type="ChEBI" id="CHEBI:37563"/>
    </ligand>
</feature>
<feature type="binding site" evidence="1">
    <location>
        <begin position="270"/>
        <end position="273"/>
    </location>
    <ligand>
        <name>CTP</name>
        <dbReference type="ChEBI" id="CHEBI:37563"/>
    </ligand>
</feature>
<feature type="binding site" evidence="1">
    <location>
        <position position="298"/>
    </location>
    <ligand>
        <name>CTP</name>
        <dbReference type="ChEBI" id="CHEBI:37563"/>
    </ligand>
</feature>
<feature type="binding site" evidence="1">
    <location>
        <begin position="346"/>
        <end position="349"/>
    </location>
    <ligand>
        <name>CTP</name>
        <dbReference type="ChEBI" id="CHEBI:37563"/>
    </ligand>
</feature>
<feature type="binding site" evidence="1">
    <location>
        <begin position="377"/>
        <end position="381"/>
    </location>
    <ligand>
        <name>CTP</name>
        <dbReference type="ChEBI" id="CHEBI:37563"/>
    </ligand>
</feature>
<feature type="modified residue" description="Phosphoserine" evidence="11">
    <location>
        <position position="416"/>
    </location>
</feature>
<feature type="mutagenesis site" description="In pect1-4; delayed embryo maturation and reduced fertility." evidence="4">
    <original>P</original>
    <variation>S</variation>
    <location>
        <position position="126"/>
    </location>
</feature>
<evidence type="ECO:0000250" key="1">
    <source>
        <dbReference type="UniProtKB" id="Q99447"/>
    </source>
</evidence>
<evidence type="ECO:0000255" key="2"/>
<evidence type="ECO:0000256" key="3">
    <source>
        <dbReference type="SAM" id="MobiDB-lite"/>
    </source>
</evidence>
<evidence type="ECO:0000269" key="4">
    <source>
    </source>
</evidence>
<evidence type="ECO:0000303" key="5">
    <source>
    </source>
</evidence>
<evidence type="ECO:0000305" key="6"/>
<evidence type="ECO:0000305" key="7">
    <source>
    </source>
</evidence>
<evidence type="ECO:0000305" key="8">
    <source>
    </source>
</evidence>
<evidence type="ECO:0000312" key="9">
    <source>
        <dbReference type="Araport" id="AT2G38670"/>
    </source>
</evidence>
<evidence type="ECO:0000312" key="10">
    <source>
        <dbReference type="EMBL" id="AAC67351.1"/>
    </source>
</evidence>
<evidence type="ECO:0007744" key="11">
    <source>
    </source>
</evidence>
<dbReference type="EC" id="2.7.7.14" evidence="4"/>
<dbReference type="EMBL" id="AC005499">
    <property type="protein sequence ID" value="AAC67351.1"/>
    <property type="molecule type" value="Genomic_DNA"/>
</dbReference>
<dbReference type="EMBL" id="CP002685">
    <property type="protein sequence ID" value="AEC09568.1"/>
    <property type="molecule type" value="Genomic_DNA"/>
</dbReference>
<dbReference type="EMBL" id="AY092984">
    <property type="protein sequence ID" value="AAM12983.1"/>
    <property type="molecule type" value="mRNA"/>
</dbReference>
<dbReference type="EMBL" id="AY128807">
    <property type="protein sequence ID" value="AAM91207.1"/>
    <property type="molecule type" value="mRNA"/>
</dbReference>
<dbReference type="PIR" id="H84807">
    <property type="entry name" value="H84807"/>
</dbReference>
<dbReference type="RefSeq" id="NP_181401.1">
    <property type="nucleotide sequence ID" value="NM_129424.5"/>
</dbReference>
<dbReference type="SMR" id="Q9ZVI9"/>
<dbReference type="BioGRID" id="3791">
    <property type="interactions" value="1"/>
</dbReference>
<dbReference type="FunCoup" id="Q9ZVI9">
    <property type="interactions" value="3757"/>
</dbReference>
<dbReference type="IntAct" id="Q9ZVI9">
    <property type="interactions" value="2"/>
</dbReference>
<dbReference type="STRING" id="3702.Q9ZVI9"/>
<dbReference type="iPTMnet" id="Q9ZVI9"/>
<dbReference type="SwissPalm" id="Q9ZVI9"/>
<dbReference type="PaxDb" id="3702-AT2G38670.1"/>
<dbReference type="ProteomicsDB" id="235114"/>
<dbReference type="EnsemblPlants" id="AT2G38670.1">
    <property type="protein sequence ID" value="AT2G38670.1"/>
    <property type="gene ID" value="AT2G38670"/>
</dbReference>
<dbReference type="GeneID" id="818449"/>
<dbReference type="Gramene" id="AT2G38670.1">
    <property type="protein sequence ID" value="AT2G38670.1"/>
    <property type="gene ID" value="AT2G38670"/>
</dbReference>
<dbReference type="KEGG" id="ath:AT2G38670"/>
<dbReference type="Araport" id="AT2G38670"/>
<dbReference type="TAIR" id="AT2G38670">
    <property type="gene designation" value="PECT1"/>
</dbReference>
<dbReference type="eggNOG" id="KOG2803">
    <property type="taxonomic scope" value="Eukaryota"/>
</dbReference>
<dbReference type="HOGENOM" id="CLU_031246_2_1_1"/>
<dbReference type="InParanoid" id="Q9ZVI9"/>
<dbReference type="OMA" id="QCKYINA"/>
<dbReference type="OrthoDB" id="40021at2759"/>
<dbReference type="PhylomeDB" id="Q9ZVI9"/>
<dbReference type="BioCyc" id="ARA:AT2G38670-MONOMER"/>
<dbReference type="BioCyc" id="MetaCyc:AT2G38670-MONOMER"/>
<dbReference type="BRENDA" id="2.7.7.14">
    <property type="organism ID" value="399"/>
</dbReference>
<dbReference type="UniPathway" id="UPA00558">
    <property type="reaction ID" value="UER00742"/>
</dbReference>
<dbReference type="PRO" id="PR:Q9ZVI9"/>
<dbReference type="Proteomes" id="UP000006548">
    <property type="component" value="Chromosome 2"/>
</dbReference>
<dbReference type="ExpressionAtlas" id="Q9ZVI9">
    <property type="expression patterns" value="baseline and differential"/>
</dbReference>
<dbReference type="GO" id="GO:0005794">
    <property type="term" value="C:Golgi apparatus"/>
    <property type="evidence" value="ECO:0007005"/>
    <property type="project" value="TAIR"/>
</dbReference>
<dbReference type="GO" id="GO:0005741">
    <property type="term" value="C:mitochondrial outer membrane"/>
    <property type="evidence" value="ECO:0007669"/>
    <property type="project" value="UniProtKB-SubCell"/>
</dbReference>
<dbReference type="GO" id="GO:0005739">
    <property type="term" value="C:mitochondrion"/>
    <property type="evidence" value="ECO:0007005"/>
    <property type="project" value="TAIR"/>
</dbReference>
<dbReference type="GO" id="GO:0004306">
    <property type="term" value="F:ethanolamine-phosphate cytidylyltransferase activity"/>
    <property type="evidence" value="ECO:0000315"/>
    <property type="project" value="TAIR"/>
</dbReference>
<dbReference type="GO" id="GO:0006646">
    <property type="term" value="P:phosphatidylethanolamine biosynthetic process"/>
    <property type="evidence" value="ECO:0000304"/>
    <property type="project" value="TAIR"/>
</dbReference>
<dbReference type="CDD" id="cd02174">
    <property type="entry name" value="CCT"/>
    <property type="match status" value="1"/>
</dbReference>
<dbReference type="CDD" id="cd02173">
    <property type="entry name" value="ECT"/>
    <property type="match status" value="1"/>
</dbReference>
<dbReference type="FunFam" id="3.40.50.620:FF:000249">
    <property type="entry name" value="Ethanolamine-phosphate cytidylyltransferase"/>
    <property type="match status" value="1"/>
</dbReference>
<dbReference type="Gene3D" id="3.40.50.620">
    <property type="entry name" value="HUPs"/>
    <property type="match status" value="2"/>
</dbReference>
<dbReference type="InterPro" id="IPR041723">
    <property type="entry name" value="CCT"/>
</dbReference>
<dbReference type="InterPro" id="IPR004821">
    <property type="entry name" value="Cyt_trans-like"/>
</dbReference>
<dbReference type="InterPro" id="IPR044608">
    <property type="entry name" value="Ect1/PCYT2"/>
</dbReference>
<dbReference type="InterPro" id="IPR014729">
    <property type="entry name" value="Rossmann-like_a/b/a_fold"/>
</dbReference>
<dbReference type="NCBIfam" id="TIGR00125">
    <property type="entry name" value="cyt_tran_rel"/>
    <property type="match status" value="2"/>
</dbReference>
<dbReference type="PANTHER" id="PTHR45780">
    <property type="entry name" value="ETHANOLAMINE-PHOSPHATE CYTIDYLYLTRANSFERASE"/>
    <property type="match status" value="1"/>
</dbReference>
<dbReference type="PANTHER" id="PTHR45780:SF2">
    <property type="entry name" value="ETHANOLAMINE-PHOSPHATE CYTIDYLYLTRANSFERASE"/>
    <property type="match status" value="1"/>
</dbReference>
<dbReference type="Pfam" id="PF01467">
    <property type="entry name" value="CTP_transf_like"/>
    <property type="match status" value="2"/>
</dbReference>
<dbReference type="SUPFAM" id="SSF52374">
    <property type="entry name" value="Nucleotidylyl transferase"/>
    <property type="match status" value="2"/>
</dbReference>
<name>PECT1_ARATH</name>
<gene>
    <name evidence="5" type="primary">PECT1</name>
    <name evidence="9" type="ordered locus">At2g38670</name>
    <name evidence="10" type="ORF">T6A23.13</name>
</gene>
<accession>Q9ZVI9</accession>
<organism>
    <name type="scientific">Arabidopsis thaliana</name>
    <name type="common">Mouse-ear cress</name>
    <dbReference type="NCBI Taxonomy" id="3702"/>
    <lineage>
        <taxon>Eukaryota</taxon>
        <taxon>Viridiplantae</taxon>
        <taxon>Streptophyta</taxon>
        <taxon>Embryophyta</taxon>
        <taxon>Tracheophyta</taxon>
        <taxon>Spermatophyta</taxon>
        <taxon>Magnoliopsida</taxon>
        <taxon>eudicotyledons</taxon>
        <taxon>Gunneridae</taxon>
        <taxon>Pentapetalae</taxon>
        <taxon>rosids</taxon>
        <taxon>malvids</taxon>
        <taxon>Brassicales</taxon>
        <taxon>Brassicaceae</taxon>
        <taxon>Camelineae</taxon>
        <taxon>Arabidopsis</taxon>
    </lineage>
</organism>